<accession>A7ZMH7</accession>
<keyword id="KW-0067">ATP-binding</keyword>
<keyword id="KW-0997">Cell inner membrane</keyword>
<keyword id="KW-1003">Cell membrane</keyword>
<keyword id="KW-0472">Membrane</keyword>
<keyword id="KW-0547">Nucleotide-binding</keyword>
<keyword id="KW-1185">Reference proteome</keyword>
<keyword id="KW-1278">Translocase</keyword>
<keyword id="KW-0813">Transport</keyword>
<reference key="1">
    <citation type="journal article" date="2008" name="J. Bacteriol.">
        <title>The pangenome structure of Escherichia coli: comparative genomic analysis of E. coli commensal and pathogenic isolates.</title>
        <authorList>
            <person name="Rasko D.A."/>
            <person name="Rosovitz M.J."/>
            <person name="Myers G.S.A."/>
            <person name="Mongodin E.F."/>
            <person name="Fricke W.F."/>
            <person name="Gajer P."/>
            <person name="Crabtree J."/>
            <person name="Sebaihia M."/>
            <person name="Thomson N.R."/>
            <person name="Chaudhuri R."/>
            <person name="Henderson I.R."/>
            <person name="Sperandio V."/>
            <person name="Ravel J."/>
        </authorList>
    </citation>
    <scope>NUCLEOTIDE SEQUENCE [LARGE SCALE GENOMIC DNA]</scope>
    <source>
        <strain>E24377A / ETEC</strain>
    </source>
</reference>
<protein>
    <recommendedName>
        <fullName evidence="1">Vitamin B12 import ATP-binding protein BtuD</fullName>
        <ecNumber evidence="1">7.6.2.8</ecNumber>
    </recommendedName>
    <alternativeName>
        <fullName evidence="1">Vitamin B12-transporting ATPase</fullName>
    </alternativeName>
</protein>
<gene>
    <name evidence="1" type="primary">btuD</name>
    <name type="ordered locus">EcE24377A_1928</name>
</gene>
<comment type="function">
    <text evidence="1">Part of the ABC transporter complex BtuCDF involved in vitamin B12 import. Responsible for energy coupling to the transport system.</text>
</comment>
<comment type="catalytic activity">
    <reaction evidence="1">
        <text>an R-cob(III)alamin(out) + ATP + H2O = an R-cob(III)alamin(in) + ADP + phosphate + H(+)</text>
        <dbReference type="Rhea" id="RHEA:17873"/>
        <dbReference type="ChEBI" id="CHEBI:15377"/>
        <dbReference type="ChEBI" id="CHEBI:15378"/>
        <dbReference type="ChEBI" id="CHEBI:30616"/>
        <dbReference type="ChEBI" id="CHEBI:43474"/>
        <dbReference type="ChEBI" id="CHEBI:140785"/>
        <dbReference type="ChEBI" id="CHEBI:456216"/>
        <dbReference type="EC" id="7.6.2.8"/>
    </reaction>
</comment>
<comment type="subunit">
    <text evidence="1">The complex is composed of two ATP-binding proteins (BtuD), two transmembrane proteins (BtuC) and a solute-binding protein (BtuF).</text>
</comment>
<comment type="subcellular location">
    <subcellularLocation>
        <location evidence="1">Cell inner membrane</location>
        <topology evidence="1">Peripheral membrane protein</topology>
    </subcellularLocation>
</comment>
<comment type="similarity">
    <text evidence="1">Belongs to the ABC transporter superfamily. Vitamin B12 importer (TC 3.A.1.13.1) family.</text>
</comment>
<feature type="chain" id="PRO_1000083959" description="Vitamin B12 import ATP-binding protein BtuD">
    <location>
        <begin position="1"/>
        <end position="249"/>
    </location>
</feature>
<feature type="domain" description="ABC transporter" evidence="1">
    <location>
        <begin position="1"/>
        <end position="233"/>
    </location>
</feature>
<feature type="binding site" evidence="1">
    <location>
        <begin position="33"/>
        <end position="40"/>
    </location>
    <ligand>
        <name>ATP</name>
        <dbReference type="ChEBI" id="CHEBI:30616"/>
    </ligand>
</feature>
<name>BTUD_ECO24</name>
<organism>
    <name type="scientific">Escherichia coli O139:H28 (strain E24377A / ETEC)</name>
    <dbReference type="NCBI Taxonomy" id="331111"/>
    <lineage>
        <taxon>Bacteria</taxon>
        <taxon>Pseudomonadati</taxon>
        <taxon>Pseudomonadota</taxon>
        <taxon>Gammaproteobacteria</taxon>
        <taxon>Enterobacterales</taxon>
        <taxon>Enterobacteriaceae</taxon>
        <taxon>Escherichia</taxon>
    </lineage>
</organism>
<dbReference type="EC" id="7.6.2.8" evidence="1"/>
<dbReference type="EMBL" id="CP000800">
    <property type="protein sequence ID" value="ABV18131.1"/>
    <property type="molecule type" value="Genomic_DNA"/>
</dbReference>
<dbReference type="RefSeq" id="WP_000029466.1">
    <property type="nucleotide sequence ID" value="NC_009801.1"/>
</dbReference>
<dbReference type="SMR" id="A7ZMH7"/>
<dbReference type="GeneID" id="93775873"/>
<dbReference type="KEGG" id="ecw:EcE24377A_1928"/>
<dbReference type="HOGENOM" id="CLU_000604_1_11_6"/>
<dbReference type="Proteomes" id="UP000001122">
    <property type="component" value="Chromosome"/>
</dbReference>
<dbReference type="GO" id="GO:0005886">
    <property type="term" value="C:plasma membrane"/>
    <property type="evidence" value="ECO:0007669"/>
    <property type="project" value="UniProtKB-SubCell"/>
</dbReference>
<dbReference type="GO" id="GO:0015420">
    <property type="term" value="F:ABC-type vitamin B12 transporter activity"/>
    <property type="evidence" value="ECO:0007669"/>
    <property type="project" value="UniProtKB-UniRule"/>
</dbReference>
<dbReference type="GO" id="GO:0005524">
    <property type="term" value="F:ATP binding"/>
    <property type="evidence" value="ECO:0007669"/>
    <property type="project" value="UniProtKB-KW"/>
</dbReference>
<dbReference type="GO" id="GO:0016887">
    <property type="term" value="F:ATP hydrolysis activity"/>
    <property type="evidence" value="ECO:0007669"/>
    <property type="project" value="InterPro"/>
</dbReference>
<dbReference type="CDD" id="cd03214">
    <property type="entry name" value="ABC_Iron-Siderophores_B12_Hemin"/>
    <property type="match status" value="1"/>
</dbReference>
<dbReference type="FunFam" id="3.40.50.300:FF:000462">
    <property type="entry name" value="Vitamin B12 import ATP-binding protein BtuD"/>
    <property type="match status" value="1"/>
</dbReference>
<dbReference type="Gene3D" id="3.40.50.300">
    <property type="entry name" value="P-loop containing nucleotide triphosphate hydrolases"/>
    <property type="match status" value="1"/>
</dbReference>
<dbReference type="HAMAP" id="MF_01005">
    <property type="entry name" value="BtuD"/>
    <property type="match status" value="1"/>
</dbReference>
<dbReference type="InterPro" id="IPR003593">
    <property type="entry name" value="AAA+_ATPase"/>
</dbReference>
<dbReference type="InterPro" id="IPR003439">
    <property type="entry name" value="ABC_transporter-like_ATP-bd"/>
</dbReference>
<dbReference type="InterPro" id="IPR017871">
    <property type="entry name" value="ABC_transporter-like_CS"/>
</dbReference>
<dbReference type="InterPro" id="IPR023693">
    <property type="entry name" value="ABC_transptr_BtuD"/>
</dbReference>
<dbReference type="InterPro" id="IPR050153">
    <property type="entry name" value="Metal_Ion_Import_ABC"/>
</dbReference>
<dbReference type="InterPro" id="IPR027417">
    <property type="entry name" value="P-loop_NTPase"/>
</dbReference>
<dbReference type="NCBIfam" id="NF002981">
    <property type="entry name" value="PRK03695.1"/>
    <property type="match status" value="1"/>
</dbReference>
<dbReference type="PANTHER" id="PTHR42734">
    <property type="entry name" value="METAL TRANSPORT SYSTEM ATP-BINDING PROTEIN TM_0124-RELATED"/>
    <property type="match status" value="1"/>
</dbReference>
<dbReference type="PANTHER" id="PTHR42734:SF18">
    <property type="entry name" value="VITAMIN B12 IMPORT ATP-BINDING PROTEIN BTUD"/>
    <property type="match status" value="1"/>
</dbReference>
<dbReference type="Pfam" id="PF00005">
    <property type="entry name" value="ABC_tran"/>
    <property type="match status" value="1"/>
</dbReference>
<dbReference type="SMART" id="SM00382">
    <property type="entry name" value="AAA"/>
    <property type="match status" value="1"/>
</dbReference>
<dbReference type="SUPFAM" id="SSF52540">
    <property type="entry name" value="P-loop containing nucleoside triphosphate hydrolases"/>
    <property type="match status" value="1"/>
</dbReference>
<dbReference type="PROSITE" id="PS00211">
    <property type="entry name" value="ABC_TRANSPORTER_1"/>
    <property type="match status" value="1"/>
</dbReference>
<dbReference type="PROSITE" id="PS50893">
    <property type="entry name" value="ABC_TRANSPORTER_2"/>
    <property type="match status" value="1"/>
</dbReference>
<evidence type="ECO:0000255" key="1">
    <source>
        <dbReference type="HAMAP-Rule" id="MF_01005"/>
    </source>
</evidence>
<proteinExistence type="inferred from homology"/>
<sequence>MSIVMQLQDVAESTRLGPLSGEVRAGEILHLVGPNGAGKSTLLARMAGMTSGKGSIQFAGQPLEAWSATKLALHRAYLSQQQTPPFAMPVWHYLTLHQHDKTRTELLNDVAGALALDDKLGRSTNQLSGGEWQRVRLAAVVLQITPQANPAGQLLLLDEPMNSLDVAQQSALDKILSALCQQGLAIVMSSHDLNHTLRHAHRAWLLKGGKMLASGRREEVLTPPNLAQAYGMNFRRLDIEGHRMLISTI</sequence>